<name>RL10_CHLL3</name>
<proteinExistence type="inferred from homology"/>
<gene>
    <name evidence="1" type="primary">rplJ</name>
    <name type="ordered locus">Plut_1964</name>
</gene>
<protein>
    <recommendedName>
        <fullName evidence="1">Large ribosomal subunit protein uL10</fullName>
    </recommendedName>
    <alternativeName>
        <fullName evidence="2">50S ribosomal protein L10</fullName>
    </alternativeName>
</protein>
<feature type="chain" id="PRO_0000234869" description="Large ribosomal subunit protein uL10">
    <location>
        <begin position="1"/>
        <end position="172"/>
    </location>
</feature>
<accession>Q3B1H5</accession>
<organism>
    <name type="scientific">Chlorobium luteolum (strain DSM 273 / BCRC 81028 / 2530)</name>
    <name type="common">Pelodictyon luteolum</name>
    <dbReference type="NCBI Taxonomy" id="319225"/>
    <lineage>
        <taxon>Bacteria</taxon>
        <taxon>Pseudomonadati</taxon>
        <taxon>Chlorobiota</taxon>
        <taxon>Chlorobiia</taxon>
        <taxon>Chlorobiales</taxon>
        <taxon>Chlorobiaceae</taxon>
        <taxon>Chlorobium/Pelodictyon group</taxon>
        <taxon>Pelodictyon</taxon>
    </lineage>
</organism>
<comment type="function">
    <text evidence="1">Forms part of the ribosomal stalk, playing a central role in the interaction of the ribosome with GTP-bound translation factors.</text>
</comment>
<comment type="subunit">
    <text evidence="1">Part of the ribosomal stalk of the 50S ribosomal subunit. The N-terminus interacts with L11 and the large rRNA to form the base of the stalk. The C-terminus forms an elongated spine to which L12 dimers bind in a sequential fashion forming a multimeric L10(L12)X complex.</text>
</comment>
<comment type="similarity">
    <text evidence="1">Belongs to the universal ribosomal protein uL10 family.</text>
</comment>
<sequence>MKRDKKEQVVSEVSEKLRRSQGIYLTEFQGLSVARMAELRNEFRKAGVEYRVVKNTLIKKALSDMEGADKLAPALKSTTAVAFGYDDPIAPARVITKFSKTNEALKFKMAAIDGVVFGSDKLPALSEMLTKTENIGRAAGVINNVVASVPMVVNAVMRNLVSVIDQVGKQKQ</sequence>
<dbReference type="EMBL" id="CP000096">
    <property type="protein sequence ID" value="ABB24806.1"/>
    <property type="molecule type" value="Genomic_DNA"/>
</dbReference>
<dbReference type="RefSeq" id="WP_011358676.1">
    <property type="nucleotide sequence ID" value="NC_007512.1"/>
</dbReference>
<dbReference type="SMR" id="Q3B1H5"/>
<dbReference type="STRING" id="319225.Plut_1964"/>
<dbReference type="KEGG" id="plt:Plut_1964"/>
<dbReference type="eggNOG" id="COG0244">
    <property type="taxonomic scope" value="Bacteria"/>
</dbReference>
<dbReference type="HOGENOM" id="CLU_092227_2_1_10"/>
<dbReference type="OrthoDB" id="1523686at2"/>
<dbReference type="Proteomes" id="UP000002709">
    <property type="component" value="Chromosome"/>
</dbReference>
<dbReference type="GO" id="GO:1990904">
    <property type="term" value="C:ribonucleoprotein complex"/>
    <property type="evidence" value="ECO:0007669"/>
    <property type="project" value="UniProtKB-KW"/>
</dbReference>
<dbReference type="GO" id="GO:0005840">
    <property type="term" value="C:ribosome"/>
    <property type="evidence" value="ECO:0007669"/>
    <property type="project" value="UniProtKB-KW"/>
</dbReference>
<dbReference type="GO" id="GO:0070180">
    <property type="term" value="F:large ribosomal subunit rRNA binding"/>
    <property type="evidence" value="ECO:0007669"/>
    <property type="project" value="UniProtKB-UniRule"/>
</dbReference>
<dbReference type="GO" id="GO:0006412">
    <property type="term" value="P:translation"/>
    <property type="evidence" value="ECO:0007669"/>
    <property type="project" value="UniProtKB-UniRule"/>
</dbReference>
<dbReference type="CDD" id="cd05797">
    <property type="entry name" value="Ribosomal_L10"/>
    <property type="match status" value="1"/>
</dbReference>
<dbReference type="Gene3D" id="3.30.70.1730">
    <property type="match status" value="1"/>
</dbReference>
<dbReference type="Gene3D" id="6.10.250.290">
    <property type="match status" value="1"/>
</dbReference>
<dbReference type="HAMAP" id="MF_00362">
    <property type="entry name" value="Ribosomal_uL10"/>
    <property type="match status" value="1"/>
</dbReference>
<dbReference type="InterPro" id="IPR001790">
    <property type="entry name" value="Ribosomal_uL10"/>
</dbReference>
<dbReference type="InterPro" id="IPR043141">
    <property type="entry name" value="Ribosomal_uL10-like_sf"/>
</dbReference>
<dbReference type="InterPro" id="IPR022973">
    <property type="entry name" value="Ribosomal_uL10_bac"/>
</dbReference>
<dbReference type="InterPro" id="IPR047865">
    <property type="entry name" value="Ribosomal_uL10_bac_type"/>
</dbReference>
<dbReference type="NCBIfam" id="NF000955">
    <property type="entry name" value="PRK00099.1-1"/>
    <property type="match status" value="1"/>
</dbReference>
<dbReference type="PANTHER" id="PTHR11560">
    <property type="entry name" value="39S RIBOSOMAL PROTEIN L10, MITOCHONDRIAL"/>
    <property type="match status" value="1"/>
</dbReference>
<dbReference type="Pfam" id="PF00466">
    <property type="entry name" value="Ribosomal_L10"/>
    <property type="match status" value="1"/>
</dbReference>
<dbReference type="SUPFAM" id="SSF160369">
    <property type="entry name" value="Ribosomal protein L10-like"/>
    <property type="match status" value="1"/>
</dbReference>
<evidence type="ECO:0000255" key="1">
    <source>
        <dbReference type="HAMAP-Rule" id="MF_00362"/>
    </source>
</evidence>
<evidence type="ECO:0000305" key="2"/>
<reference key="1">
    <citation type="submission" date="2005-08" db="EMBL/GenBank/DDBJ databases">
        <title>Complete sequence of Pelodictyon luteolum DSM 273.</title>
        <authorList>
            <consortium name="US DOE Joint Genome Institute"/>
            <person name="Copeland A."/>
            <person name="Lucas S."/>
            <person name="Lapidus A."/>
            <person name="Barry K."/>
            <person name="Detter J.C."/>
            <person name="Glavina T."/>
            <person name="Hammon N."/>
            <person name="Israni S."/>
            <person name="Pitluck S."/>
            <person name="Bryant D."/>
            <person name="Schmutz J."/>
            <person name="Larimer F."/>
            <person name="Land M."/>
            <person name="Kyrpides N."/>
            <person name="Ivanova N."/>
            <person name="Richardson P."/>
        </authorList>
    </citation>
    <scope>NUCLEOTIDE SEQUENCE [LARGE SCALE GENOMIC DNA]</scope>
    <source>
        <strain>DSM 273 / BCRC 81028 / 2530</strain>
    </source>
</reference>
<keyword id="KW-1185">Reference proteome</keyword>
<keyword id="KW-0687">Ribonucleoprotein</keyword>
<keyword id="KW-0689">Ribosomal protein</keyword>
<keyword id="KW-0694">RNA-binding</keyword>
<keyword id="KW-0699">rRNA-binding</keyword>